<proteinExistence type="inferred from homology"/>
<gene>
    <name evidence="1" type="primary">hisH</name>
    <name type="ordered locus">SPO1162</name>
</gene>
<comment type="function">
    <text evidence="1">IGPS catalyzes the conversion of PRFAR and glutamine to IGP, AICAR and glutamate. The HisH subunit catalyzes the hydrolysis of glutamine to glutamate and ammonia as part of the synthesis of IGP and AICAR. The resulting ammonia molecule is channeled to the active site of HisF.</text>
</comment>
<comment type="catalytic activity">
    <reaction evidence="1">
        <text>5-[(5-phospho-1-deoxy-D-ribulos-1-ylimino)methylamino]-1-(5-phospho-beta-D-ribosyl)imidazole-4-carboxamide + L-glutamine = D-erythro-1-(imidazol-4-yl)glycerol 3-phosphate + 5-amino-1-(5-phospho-beta-D-ribosyl)imidazole-4-carboxamide + L-glutamate + H(+)</text>
        <dbReference type="Rhea" id="RHEA:24793"/>
        <dbReference type="ChEBI" id="CHEBI:15378"/>
        <dbReference type="ChEBI" id="CHEBI:29985"/>
        <dbReference type="ChEBI" id="CHEBI:58278"/>
        <dbReference type="ChEBI" id="CHEBI:58359"/>
        <dbReference type="ChEBI" id="CHEBI:58475"/>
        <dbReference type="ChEBI" id="CHEBI:58525"/>
        <dbReference type="EC" id="4.3.2.10"/>
    </reaction>
</comment>
<comment type="catalytic activity">
    <reaction evidence="1">
        <text>L-glutamine + H2O = L-glutamate + NH4(+)</text>
        <dbReference type="Rhea" id="RHEA:15889"/>
        <dbReference type="ChEBI" id="CHEBI:15377"/>
        <dbReference type="ChEBI" id="CHEBI:28938"/>
        <dbReference type="ChEBI" id="CHEBI:29985"/>
        <dbReference type="ChEBI" id="CHEBI:58359"/>
        <dbReference type="EC" id="3.5.1.2"/>
    </reaction>
</comment>
<comment type="pathway">
    <text evidence="1">Amino-acid biosynthesis; L-histidine biosynthesis; L-histidine from 5-phospho-alpha-D-ribose 1-diphosphate: step 5/9.</text>
</comment>
<comment type="subunit">
    <text evidence="1">Heterodimer of HisH and HisF.</text>
</comment>
<comment type="subcellular location">
    <subcellularLocation>
        <location evidence="1">Cytoplasm</location>
    </subcellularLocation>
</comment>
<sequence>MLTAIIDYESGNLHSAEKAFQRMARETGAGEVVVTSDADLVARADRLVLPGDGAFPACAAELRGHKGLYDAMVEAVEQKGRPFLGICVGMQLMATTGHEYEETPGLGWVAGDVVRITPENAALKVPHMGWNDLVIEAAHPIFDGIAGGDHVYFVHSYHFRVTNPTERLAHVDYGGPVTAVVGRDTMVGLQFHPEKSQAIGLRMIGNFLTWTP</sequence>
<evidence type="ECO:0000255" key="1">
    <source>
        <dbReference type="HAMAP-Rule" id="MF_00278"/>
    </source>
</evidence>
<accession>Q5LU93</accession>
<name>HIS5_RUEPO</name>
<organism>
    <name type="scientific">Ruegeria pomeroyi (strain ATCC 700808 / DSM 15171 / DSS-3)</name>
    <name type="common">Silicibacter pomeroyi</name>
    <dbReference type="NCBI Taxonomy" id="246200"/>
    <lineage>
        <taxon>Bacteria</taxon>
        <taxon>Pseudomonadati</taxon>
        <taxon>Pseudomonadota</taxon>
        <taxon>Alphaproteobacteria</taxon>
        <taxon>Rhodobacterales</taxon>
        <taxon>Roseobacteraceae</taxon>
        <taxon>Ruegeria</taxon>
    </lineage>
</organism>
<keyword id="KW-0028">Amino-acid biosynthesis</keyword>
<keyword id="KW-0963">Cytoplasm</keyword>
<keyword id="KW-0315">Glutamine amidotransferase</keyword>
<keyword id="KW-0368">Histidine biosynthesis</keyword>
<keyword id="KW-0378">Hydrolase</keyword>
<keyword id="KW-0456">Lyase</keyword>
<keyword id="KW-1185">Reference proteome</keyword>
<dbReference type="EC" id="4.3.2.10" evidence="1"/>
<dbReference type="EC" id="3.5.1.2" evidence="1"/>
<dbReference type="EMBL" id="CP000031">
    <property type="protein sequence ID" value="AAV94461.1"/>
    <property type="molecule type" value="Genomic_DNA"/>
</dbReference>
<dbReference type="RefSeq" id="WP_011046908.1">
    <property type="nucleotide sequence ID" value="NC_003911.12"/>
</dbReference>
<dbReference type="SMR" id="Q5LU93"/>
<dbReference type="STRING" id="246200.SPO1162"/>
<dbReference type="MEROPS" id="C26.965"/>
<dbReference type="PaxDb" id="246200-SPO1162"/>
<dbReference type="KEGG" id="sil:SPO1162"/>
<dbReference type="eggNOG" id="COG0118">
    <property type="taxonomic scope" value="Bacteria"/>
</dbReference>
<dbReference type="HOGENOM" id="CLU_071837_2_0_5"/>
<dbReference type="OrthoDB" id="9807137at2"/>
<dbReference type="UniPathway" id="UPA00031">
    <property type="reaction ID" value="UER00010"/>
</dbReference>
<dbReference type="Proteomes" id="UP000001023">
    <property type="component" value="Chromosome"/>
</dbReference>
<dbReference type="GO" id="GO:0005737">
    <property type="term" value="C:cytoplasm"/>
    <property type="evidence" value="ECO:0007669"/>
    <property type="project" value="UniProtKB-SubCell"/>
</dbReference>
<dbReference type="GO" id="GO:0004359">
    <property type="term" value="F:glutaminase activity"/>
    <property type="evidence" value="ECO:0007669"/>
    <property type="project" value="UniProtKB-EC"/>
</dbReference>
<dbReference type="GO" id="GO:0000107">
    <property type="term" value="F:imidazoleglycerol-phosphate synthase activity"/>
    <property type="evidence" value="ECO:0007669"/>
    <property type="project" value="UniProtKB-UniRule"/>
</dbReference>
<dbReference type="GO" id="GO:0016829">
    <property type="term" value="F:lyase activity"/>
    <property type="evidence" value="ECO:0007669"/>
    <property type="project" value="UniProtKB-KW"/>
</dbReference>
<dbReference type="GO" id="GO:0000105">
    <property type="term" value="P:L-histidine biosynthetic process"/>
    <property type="evidence" value="ECO:0007669"/>
    <property type="project" value="UniProtKB-UniRule"/>
</dbReference>
<dbReference type="CDD" id="cd01748">
    <property type="entry name" value="GATase1_IGP_Synthase"/>
    <property type="match status" value="1"/>
</dbReference>
<dbReference type="Gene3D" id="3.40.50.880">
    <property type="match status" value="1"/>
</dbReference>
<dbReference type="HAMAP" id="MF_00278">
    <property type="entry name" value="HisH"/>
    <property type="match status" value="1"/>
</dbReference>
<dbReference type="InterPro" id="IPR029062">
    <property type="entry name" value="Class_I_gatase-like"/>
</dbReference>
<dbReference type="InterPro" id="IPR017926">
    <property type="entry name" value="GATASE"/>
</dbReference>
<dbReference type="InterPro" id="IPR010139">
    <property type="entry name" value="Imidazole-glycPsynth_HisH"/>
</dbReference>
<dbReference type="NCBIfam" id="TIGR01855">
    <property type="entry name" value="IMP_synth_hisH"/>
    <property type="match status" value="1"/>
</dbReference>
<dbReference type="PANTHER" id="PTHR42701">
    <property type="entry name" value="IMIDAZOLE GLYCEROL PHOSPHATE SYNTHASE SUBUNIT HISH"/>
    <property type="match status" value="1"/>
</dbReference>
<dbReference type="PANTHER" id="PTHR42701:SF1">
    <property type="entry name" value="IMIDAZOLE GLYCEROL PHOSPHATE SYNTHASE SUBUNIT HISH"/>
    <property type="match status" value="1"/>
</dbReference>
<dbReference type="Pfam" id="PF00117">
    <property type="entry name" value="GATase"/>
    <property type="match status" value="1"/>
</dbReference>
<dbReference type="PIRSF" id="PIRSF000495">
    <property type="entry name" value="Amidotransf_hisH"/>
    <property type="match status" value="1"/>
</dbReference>
<dbReference type="SUPFAM" id="SSF52317">
    <property type="entry name" value="Class I glutamine amidotransferase-like"/>
    <property type="match status" value="1"/>
</dbReference>
<dbReference type="PROSITE" id="PS51273">
    <property type="entry name" value="GATASE_TYPE_1"/>
    <property type="match status" value="1"/>
</dbReference>
<protein>
    <recommendedName>
        <fullName evidence="1">Imidazole glycerol phosphate synthase subunit HisH</fullName>
        <ecNumber evidence="1">4.3.2.10</ecNumber>
    </recommendedName>
    <alternativeName>
        <fullName evidence="1">IGP synthase glutaminase subunit</fullName>
        <ecNumber evidence="1">3.5.1.2</ecNumber>
    </alternativeName>
    <alternativeName>
        <fullName evidence="1">IGP synthase subunit HisH</fullName>
    </alternativeName>
    <alternativeName>
        <fullName evidence="1">ImGP synthase subunit HisH</fullName>
        <shortName evidence="1">IGPS subunit HisH</shortName>
    </alternativeName>
</protein>
<reference key="1">
    <citation type="journal article" date="2004" name="Nature">
        <title>Genome sequence of Silicibacter pomeroyi reveals adaptations to the marine environment.</title>
        <authorList>
            <person name="Moran M.A."/>
            <person name="Buchan A."/>
            <person name="Gonzalez J.M."/>
            <person name="Heidelberg J.F."/>
            <person name="Whitman W.B."/>
            <person name="Kiene R.P."/>
            <person name="Henriksen J.R."/>
            <person name="King G.M."/>
            <person name="Belas R."/>
            <person name="Fuqua C."/>
            <person name="Brinkac L.M."/>
            <person name="Lewis M."/>
            <person name="Johri S."/>
            <person name="Weaver B."/>
            <person name="Pai G."/>
            <person name="Eisen J.A."/>
            <person name="Rahe E."/>
            <person name="Sheldon W.M."/>
            <person name="Ye W."/>
            <person name="Miller T.R."/>
            <person name="Carlton J."/>
            <person name="Rasko D.A."/>
            <person name="Paulsen I.T."/>
            <person name="Ren Q."/>
            <person name="Daugherty S.C."/>
            <person name="DeBoy R.T."/>
            <person name="Dodson R.J."/>
            <person name="Durkin A.S."/>
            <person name="Madupu R."/>
            <person name="Nelson W.C."/>
            <person name="Sullivan S.A."/>
            <person name="Rosovitz M.J."/>
            <person name="Haft D.H."/>
            <person name="Selengut J."/>
            <person name="Ward N."/>
        </authorList>
    </citation>
    <scope>NUCLEOTIDE SEQUENCE [LARGE SCALE GENOMIC DNA]</scope>
    <source>
        <strain>ATCC 700808 / DSM 15171 / DSS-3</strain>
    </source>
</reference>
<reference key="2">
    <citation type="journal article" date="2014" name="Stand. Genomic Sci.">
        <title>An updated genome annotation for the model marine bacterium Ruegeria pomeroyi DSS-3.</title>
        <authorList>
            <person name="Rivers A.R."/>
            <person name="Smith C.B."/>
            <person name="Moran M.A."/>
        </authorList>
    </citation>
    <scope>GENOME REANNOTATION</scope>
    <source>
        <strain>ATCC 700808 / DSM 15171 / DSS-3</strain>
    </source>
</reference>
<feature type="chain" id="PRO_0000231760" description="Imidazole glycerol phosphate synthase subunit HisH">
    <location>
        <begin position="1"/>
        <end position="212"/>
    </location>
</feature>
<feature type="domain" description="Glutamine amidotransferase type-1" evidence="1">
    <location>
        <begin position="2"/>
        <end position="212"/>
    </location>
</feature>
<feature type="active site" description="Nucleophile" evidence="1">
    <location>
        <position position="87"/>
    </location>
</feature>
<feature type="active site" evidence="1">
    <location>
        <position position="192"/>
    </location>
</feature>
<feature type="active site" evidence="1">
    <location>
        <position position="194"/>
    </location>
</feature>